<proteinExistence type="inferred from homology"/>
<keyword id="KW-0963">Cytoplasm</keyword>
<keyword id="KW-0255">Endonuclease</keyword>
<keyword id="KW-0378">Hydrolase</keyword>
<keyword id="KW-0460">Magnesium</keyword>
<keyword id="KW-0479">Metal-binding</keyword>
<keyword id="KW-0507">mRNA processing</keyword>
<keyword id="KW-0540">Nuclease</keyword>
<keyword id="KW-0694">RNA-binding</keyword>
<keyword id="KW-0698">rRNA processing</keyword>
<keyword id="KW-0699">rRNA-binding</keyword>
<keyword id="KW-0819">tRNA processing</keyword>
<sequence length="226" mass="25550">MNPIVINRLQRKLGYTFNHQELLQQALTHRSASSKHNERLEFLGDSILSYVIANALYHRFPRVDEGDMSRMRATLVRGNTLAELAREFELGECLRLGPGELKSGGFRRESILADTVEALIGGVFLDSDIQTVEKLILNWYQTRLDEISPGDKQKDPKTRLQEYLQGRHLPLPTYLVVQVRGEAHDQEFTIHCQVSGLSEPVVGTGSSRRKAEQAAAEQALKKLELE</sequence>
<accession>B7M8I0</accession>
<organism>
    <name type="scientific">Escherichia coli O8 (strain IAI1)</name>
    <dbReference type="NCBI Taxonomy" id="585034"/>
    <lineage>
        <taxon>Bacteria</taxon>
        <taxon>Pseudomonadati</taxon>
        <taxon>Pseudomonadota</taxon>
        <taxon>Gammaproteobacteria</taxon>
        <taxon>Enterobacterales</taxon>
        <taxon>Enterobacteriaceae</taxon>
        <taxon>Escherichia</taxon>
    </lineage>
</organism>
<comment type="function">
    <text evidence="1">Digests double-stranded RNA. Involved in the processing of primary rRNA transcript to yield the immediate precursors to the large and small rRNAs (23S and 16S). Processes some mRNAs, and tRNAs when they are encoded in the rRNA operon. Processes pre-crRNA and tracrRNA of type II CRISPR loci if present in the organism.</text>
</comment>
<comment type="catalytic activity">
    <reaction evidence="1">
        <text>Endonucleolytic cleavage to 5'-phosphomonoester.</text>
        <dbReference type="EC" id="3.1.26.3"/>
    </reaction>
</comment>
<comment type="cofactor">
    <cofactor evidence="1">
        <name>Mg(2+)</name>
        <dbReference type="ChEBI" id="CHEBI:18420"/>
    </cofactor>
</comment>
<comment type="subunit">
    <text evidence="1">Homodimer.</text>
</comment>
<comment type="subcellular location">
    <subcellularLocation>
        <location evidence="1">Cytoplasm</location>
    </subcellularLocation>
</comment>
<comment type="similarity">
    <text evidence="1">Belongs to the ribonuclease III family.</text>
</comment>
<feature type="chain" id="PRO_1000194427" description="Ribonuclease 3">
    <location>
        <begin position="1"/>
        <end position="226"/>
    </location>
</feature>
<feature type="domain" description="RNase III" evidence="1">
    <location>
        <begin position="6"/>
        <end position="128"/>
    </location>
</feature>
<feature type="domain" description="DRBM" evidence="1">
    <location>
        <begin position="155"/>
        <end position="225"/>
    </location>
</feature>
<feature type="active site" evidence="1">
    <location>
        <position position="45"/>
    </location>
</feature>
<feature type="active site" evidence="1">
    <location>
        <position position="117"/>
    </location>
</feature>
<feature type="binding site" evidence="1">
    <location>
        <position position="41"/>
    </location>
    <ligand>
        <name>Mg(2+)</name>
        <dbReference type="ChEBI" id="CHEBI:18420"/>
    </ligand>
</feature>
<feature type="binding site" evidence="1">
    <location>
        <position position="114"/>
    </location>
    <ligand>
        <name>Mg(2+)</name>
        <dbReference type="ChEBI" id="CHEBI:18420"/>
    </ligand>
</feature>
<feature type="binding site" evidence="1">
    <location>
        <position position="117"/>
    </location>
    <ligand>
        <name>Mg(2+)</name>
        <dbReference type="ChEBI" id="CHEBI:18420"/>
    </ligand>
</feature>
<evidence type="ECO:0000255" key="1">
    <source>
        <dbReference type="HAMAP-Rule" id="MF_00104"/>
    </source>
</evidence>
<reference key="1">
    <citation type="journal article" date="2009" name="PLoS Genet.">
        <title>Organised genome dynamics in the Escherichia coli species results in highly diverse adaptive paths.</title>
        <authorList>
            <person name="Touchon M."/>
            <person name="Hoede C."/>
            <person name="Tenaillon O."/>
            <person name="Barbe V."/>
            <person name="Baeriswyl S."/>
            <person name="Bidet P."/>
            <person name="Bingen E."/>
            <person name="Bonacorsi S."/>
            <person name="Bouchier C."/>
            <person name="Bouvet O."/>
            <person name="Calteau A."/>
            <person name="Chiapello H."/>
            <person name="Clermont O."/>
            <person name="Cruveiller S."/>
            <person name="Danchin A."/>
            <person name="Diard M."/>
            <person name="Dossat C."/>
            <person name="Karoui M.E."/>
            <person name="Frapy E."/>
            <person name="Garry L."/>
            <person name="Ghigo J.M."/>
            <person name="Gilles A.M."/>
            <person name="Johnson J."/>
            <person name="Le Bouguenec C."/>
            <person name="Lescat M."/>
            <person name="Mangenot S."/>
            <person name="Martinez-Jehanne V."/>
            <person name="Matic I."/>
            <person name="Nassif X."/>
            <person name="Oztas S."/>
            <person name="Petit M.A."/>
            <person name="Pichon C."/>
            <person name="Rouy Z."/>
            <person name="Ruf C.S."/>
            <person name="Schneider D."/>
            <person name="Tourret J."/>
            <person name="Vacherie B."/>
            <person name="Vallenet D."/>
            <person name="Medigue C."/>
            <person name="Rocha E.P.C."/>
            <person name="Denamur E."/>
        </authorList>
    </citation>
    <scope>NUCLEOTIDE SEQUENCE [LARGE SCALE GENOMIC DNA]</scope>
    <source>
        <strain>IAI1</strain>
    </source>
</reference>
<gene>
    <name evidence="1" type="primary">rnc</name>
    <name type="ordered locus">ECIAI1_2678</name>
</gene>
<dbReference type="EC" id="3.1.26.3" evidence="1"/>
<dbReference type="EMBL" id="CU928160">
    <property type="protein sequence ID" value="CAQ99516.1"/>
    <property type="molecule type" value="Genomic_DNA"/>
</dbReference>
<dbReference type="RefSeq" id="WP_001068343.1">
    <property type="nucleotide sequence ID" value="NC_011741.1"/>
</dbReference>
<dbReference type="SMR" id="B7M8I0"/>
<dbReference type="GeneID" id="93774524"/>
<dbReference type="KEGG" id="ecr:ECIAI1_2678"/>
<dbReference type="HOGENOM" id="CLU_000907_1_1_6"/>
<dbReference type="GO" id="GO:0005737">
    <property type="term" value="C:cytoplasm"/>
    <property type="evidence" value="ECO:0007669"/>
    <property type="project" value="UniProtKB-SubCell"/>
</dbReference>
<dbReference type="GO" id="GO:0003725">
    <property type="term" value="F:double-stranded RNA binding"/>
    <property type="evidence" value="ECO:0007669"/>
    <property type="project" value="TreeGrafter"/>
</dbReference>
<dbReference type="GO" id="GO:0046872">
    <property type="term" value="F:metal ion binding"/>
    <property type="evidence" value="ECO:0007669"/>
    <property type="project" value="UniProtKB-KW"/>
</dbReference>
<dbReference type="GO" id="GO:0004525">
    <property type="term" value="F:ribonuclease III activity"/>
    <property type="evidence" value="ECO:0007669"/>
    <property type="project" value="UniProtKB-UniRule"/>
</dbReference>
<dbReference type="GO" id="GO:0019843">
    <property type="term" value="F:rRNA binding"/>
    <property type="evidence" value="ECO:0007669"/>
    <property type="project" value="UniProtKB-KW"/>
</dbReference>
<dbReference type="GO" id="GO:0006397">
    <property type="term" value="P:mRNA processing"/>
    <property type="evidence" value="ECO:0007669"/>
    <property type="project" value="UniProtKB-UniRule"/>
</dbReference>
<dbReference type="GO" id="GO:0010468">
    <property type="term" value="P:regulation of gene expression"/>
    <property type="evidence" value="ECO:0007669"/>
    <property type="project" value="TreeGrafter"/>
</dbReference>
<dbReference type="GO" id="GO:0006364">
    <property type="term" value="P:rRNA processing"/>
    <property type="evidence" value="ECO:0007669"/>
    <property type="project" value="UniProtKB-UniRule"/>
</dbReference>
<dbReference type="GO" id="GO:0008033">
    <property type="term" value="P:tRNA processing"/>
    <property type="evidence" value="ECO:0007669"/>
    <property type="project" value="UniProtKB-KW"/>
</dbReference>
<dbReference type="CDD" id="cd10845">
    <property type="entry name" value="DSRM_RNAse_III_family"/>
    <property type="match status" value="1"/>
</dbReference>
<dbReference type="CDD" id="cd00593">
    <property type="entry name" value="RIBOc"/>
    <property type="match status" value="1"/>
</dbReference>
<dbReference type="FunFam" id="1.10.1520.10:FF:000001">
    <property type="entry name" value="Ribonuclease 3"/>
    <property type="match status" value="1"/>
</dbReference>
<dbReference type="FunFam" id="3.30.160.20:FF:000003">
    <property type="entry name" value="Ribonuclease 3"/>
    <property type="match status" value="1"/>
</dbReference>
<dbReference type="Gene3D" id="3.30.160.20">
    <property type="match status" value="1"/>
</dbReference>
<dbReference type="Gene3D" id="1.10.1520.10">
    <property type="entry name" value="Ribonuclease III domain"/>
    <property type="match status" value="1"/>
</dbReference>
<dbReference type="HAMAP" id="MF_00104">
    <property type="entry name" value="RNase_III"/>
    <property type="match status" value="1"/>
</dbReference>
<dbReference type="InterPro" id="IPR014720">
    <property type="entry name" value="dsRBD_dom"/>
</dbReference>
<dbReference type="InterPro" id="IPR011907">
    <property type="entry name" value="RNase_III"/>
</dbReference>
<dbReference type="InterPro" id="IPR000999">
    <property type="entry name" value="RNase_III_dom"/>
</dbReference>
<dbReference type="InterPro" id="IPR036389">
    <property type="entry name" value="RNase_III_sf"/>
</dbReference>
<dbReference type="NCBIfam" id="TIGR02191">
    <property type="entry name" value="RNaseIII"/>
    <property type="match status" value="1"/>
</dbReference>
<dbReference type="PANTHER" id="PTHR11207:SF0">
    <property type="entry name" value="RIBONUCLEASE 3"/>
    <property type="match status" value="1"/>
</dbReference>
<dbReference type="PANTHER" id="PTHR11207">
    <property type="entry name" value="RIBONUCLEASE III"/>
    <property type="match status" value="1"/>
</dbReference>
<dbReference type="Pfam" id="PF00035">
    <property type="entry name" value="dsrm"/>
    <property type="match status" value="1"/>
</dbReference>
<dbReference type="Pfam" id="PF14622">
    <property type="entry name" value="Ribonucleas_3_3"/>
    <property type="match status" value="1"/>
</dbReference>
<dbReference type="SMART" id="SM00358">
    <property type="entry name" value="DSRM"/>
    <property type="match status" value="1"/>
</dbReference>
<dbReference type="SMART" id="SM00535">
    <property type="entry name" value="RIBOc"/>
    <property type="match status" value="1"/>
</dbReference>
<dbReference type="SUPFAM" id="SSF54768">
    <property type="entry name" value="dsRNA-binding domain-like"/>
    <property type="match status" value="1"/>
</dbReference>
<dbReference type="SUPFAM" id="SSF69065">
    <property type="entry name" value="RNase III domain-like"/>
    <property type="match status" value="1"/>
</dbReference>
<dbReference type="PROSITE" id="PS50137">
    <property type="entry name" value="DS_RBD"/>
    <property type="match status" value="1"/>
</dbReference>
<dbReference type="PROSITE" id="PS00517">
    <property type="entry name" value="RNASE_3_1"/>
    <property type="match status" value="1"/>
</dbReference>
<dbReference type="PROSITE" id="PS50142">
    <property type="entry name" value="RNASE_3_2"/>
    <property type="match status" value="1"/>
</dbReference>
<name>RNC_ECO8A</name>
<protein>
    <recommendedName>
        <fullName evidence="1">Ribonuclease 3</fullName>
        <ecNumber evidence="1">3.1.26.3</ecNumber>
    </recommendedName>
    <alternativeName>
        <fullName evidence="1">Ribonuclease III</fullName>
        <shortName evidence="1">RNase III</shortName>
    </alternativeName>
</protein>